<gene>
    <name type="primary">Farsa</name>
    <name type="synonym">Farsla</name>
</gene>
<proteinExistence type="evidence at protein level"/>
<keyword id="KW-0007">Acetylation</keyword>
<keyword id="KW-0030">Aminoacyl-tRNA synthetase</keyword>
<keyword id="KW-0067">ATP-binding</keyword>
<keyword id="KW-0963">Cytoplasm</keyword>
<keyword id="KW-0436">Ligase</keyword>
<keyword id="KW-0460">Magnesium</keyword>
<keyword id="KW-0479">Metal-binding</keyword>
<keyword id="KW-0547">Nucleotide-binding</keyword>
<keyword id="KW-0597">Phosphoprotein</keyword>
<keyword id="KW-0648">Protein biosynthesis</keyword>
<keyword id="KW-1185">Reference proteome</keyword>
<name>SYFA_MOUSE</name>
<protein>
    <recommendedName>
        <fullName>Phenylalanine--tRNA ligase alpha subunit</fullName>
        <ecNumber evidence="3">6.1.1.20</ecNumber>
    </recommendedName>
    <alternativeName>
        <fullName>Phenylalanyl-tRNA synthetase alpha subunit</fullName>
        <shortName>PheRS</shortName>
    </alternativeName>
</protein>
<accession>Q8C0C7</accession>
<accession>Q3U3Q9</accession>
<accession>Q91WR4</accession>
<accession>Q922S1</accession>
<sequence>MADNPVLELLLRRLEVADGGLDSAELATQLGVEHQAVVGAVKSLQALGEVIEAELRSTKCWELTTEGEEIAREGSHEARVFRSIPLEGLVQSELMHLPSGKVGFSKAMSNKWIRVDKSAADGPRVFRVVDSIEDEVQKRLQLVQAGQAEKLAEKERNELRKRKLLTEVILKTYWVSKGKAFSTSVSKQEAELSPEMISSGSWRDRPFKPYNFSARGVLPDSGHLHPLLKVRSQFRQIFLEMGFTEMPTDNFIESSFWNFDALFQPQQHPARDQHDTFFLRDPAEALQLPMGYVQRVKRTHSQGGYGSQGYKYTWKLEEARKNLLRTHTTAASARALYQLAQKKPFTPAKYFSIDRVFRNETLDATHLAEFHQIEGVIADHGLTLGHLMGVLREFFTKLGITQLRFKPAYNPYTEPSMEVFSYHQGLKKWVEVGNSGVFRPEMLLPMGLPENVSVIAWGLSLERPTMIKYGINNIRELVGHKVNLQMVYDSPVCRLDIEPRSSKTQEAA</sequence>
<organism>
    <name type="scientific">Mus musculus</name>
    <name type="common">Mouse</name>
    <dbReference type="NCBI Taxonomy" id="10090"/>
    <lineage>
        <taxon>Eukaryota</taxon>
        <taxon>Metazoa</taxon>
        <taxon>Chordata</taxon>
        <taxon>Craniata</taxon>
        <taxon>Vertebrata</taxon>
        <taxon>Euteleostomi</taxon>
        <taxon>Mammalia</taxon>
        <taxon>Eutheria</taxon>
        <taxon>Euarchontoglires</taxon>
        <taxon>Glires</taxon>
        <taxon>Rodentia</taxon>
        <taxon>Myomorpha</taxon>
        <taxon>Muroidea</taxon>
        <taxon>Muridae</taxon>
        <taxon>Murinae</taxon>
        <taxon>Mus</taxon>
        <taxon>Mus</taxon>
    </lineage>
</organism>
<evidence type="ECO:0000250" key="1">
    <source>
        <dbReference type="UniProtKB" id="A5K9S0"/>
    </source>
</evidence>
<evidence type="ECO:0000250" key="2">
    <source>
        <dbReference type="UniProtKB" id="Q505J8"/>
    </source>
</evidence>
<evidence type="ECO:0000250" key="3">
    <source>
        <dbReference type="UniProtKB" id="Q9Y285"/>
    </source>
</evidence>
<evidence type="ECO:0000305" key="4"/>
<evidence type="ECO:0007744" key="5">
    <source>
    </source>
</evidence>
<reference key="1">
    <citation type="journal article" date="2005" name="Science">
        <title>The transcriptional landscape of the mammalian genome.</title>
        <authorList>
            <person name="Carninci P."/>
            <person name="Kasukawa T."/>
            <person name="Katayama S."/>
            <person name="Gough J."/>
            <person name="Frith M.C."/>
            <person name="Maeda N."/>
            <person name="Oyama R."/>
            <person name="Ravasi T."/>
            <person name="Lenhard B."/>
            <person name="Wells C."/>
            <person name="Kodzius R."/>
            <person name="Shimokawa K."/>
            <person name="Bajic V.B."/>
            <person name="Brenner S.E."/>
            <person name="Batalov S."/>
            <person name="Forrest A.R."/>
            <person name="Zavolan M."/>
            <person name="Davis M.J."/>
            <person name="Wilming L.G."/>
            <person name="Aidinis V."/>
            <person name="Allen J.E."/>
            <person name="Ambesi-Impiombato A."/>
            <person name="Apweiler R."/>
            <person name="Aturaliya R.N."/>
            <person name="Bailey T.L."/>
            <person name="Bansal M."/>
            <person name="Baxter L."/>
            <person name="Beisel K.W."/>
            <person name="Bersano T."/>
            <person name="Bono H."/>
            <person name="Chalk A.M."/>
            <person name="Chiu K.P."/>
            <person name="Choudhary V."/>
            <person name="Christoffels A."/>
            <person name="Clutterbuck D.R."/>
            <person name="Crowe M.L."/>
            <person name="Dalla E."/>
            <person name="Dalrymple B.P."/>
            <person name="de Bono B."/>
            <person name="Della Gatta G."/>
            <person name="di Bernardo D."/>
            <person name="Down T."/>
            <person name="Engstrom P."/>
            <person name="Fagiolini M."/>
            <person name="Faulkner G."/>
            <person name="Fletcher C.F."/>
            <person name="Fukushima T."/>
            <person name="Furuno M."/>
            <person name="Futaki S."/>
            <person name="Gariboldi M."/>
            <person name="Georgii-Hemming P."/>
            <person name="Gingeras T.R."/>
            <person name="Gojobori T."/>
            <person name="Green R.E."/>
            <person name="Gustincich S."/>
            <person name="Harbers M."/>
            <person name="Hayashi Y."/>
            <person name="Hensch T.K."/>
            <person name="Hirokawa N."/>
            <person name="Hill D."/>
            <person name="Huminiecki L."/>
            <person name="Iacono M."/>
            <person name="Ikeo K."/>
            <person name="Iwama A."/>
            <person name="Ishikawa T."/>
            <person name="Jakt M."/>
            <person name="Kanapin A."/>
            <person name="Katoh M."/>
            <person name="Kawasawa Y."/>
            <person name="Kelso J."/>
            <person name="Kitamura H."/>
            <person name="Kitano H."/>
            <person name="Kollias G."/>
            <person name="Krishnan S.P."/>
            <person name="Kruger A."/>
            <person name="Kummerfeld S.K."/>
            <person name="Kurochkin I.V."/>
            <person name="Lareau L.F."/>
            <person name="Lazarevic D."/>
            <person name="Lipovich L."/>
            <person name="Liu J."/>
            <person name="Liuni S."/>
            <person name="McWilliam S."/>
            <person name="Madan Babu M."/>
            <person name="Madera M."/>
            <person name="Marchionni L."/>
            <person name="Matsuda H."/>
            <person name="Matsuzawa S."/>
            <person name="Miki H."/>
            <person name="Mignone F."/>
            <person name="Miyake S."/>
            <person name="Morris K."/>
            <person name="Mottagui-Tabar S."/>
            <person name="Mulder N."/>
            <person name="Nakano N."/>
            <person name="Nakauchi H."/>
            <person name="Ng P."/>
            <person name="Nilsson R."/>
            <person name="Nishiguchi S."/>
            <person name="Nishikawa S."/>
            <person name="Nori F."/>
            <person name="Ohara O."/>
            <person name="Okazaki Y."/>
            <person name="Orlando V."/>
            <person name="Pang K.C."/>
            <person name="Pavan W.J."/>
            <person name="Pavesi G."/>
            <person name="Pesole G."/>
            <person name="Petrovsky N."/>
            <person name="Piazza S."/>
            <person name="Reed J."/>
            <person name="Reid J.F."/>
            <person name="Ring B.Z."/>
            <person name="Ringwald M."/>
            <person name="Rost B."/>
            <person name="Ruan Y."/>
            <person name="Salzberg S.L."/>
            <person name="Sandelin A."/>
            <person name="Schneider C."/>
            <person name="Schoenbach C."/>
            <person name="Sekiguchi K."/>
            <person name="Semple C.A."/>
            <person name="Seno S."/>
            <person name="Sessa L."/>
            <person name="Sheng Y."/>
            <person name="Shibata Y."/>
            <person name="Shimada H."/>
            <person name="Shimada K."/>
            <person name="Silva D."/>
            <person name="Sinclair B."/>
            <person name="Sperling S."/>
            <person name="Stupka E."/>
            <person name="Sugiura K."/>
            <person name="Sultana R."/>
            <person name="Takenaka Y."/>
            <person name="Taki K."/>
            <person name="Tammoja K."/>
            <person name="Tan S.L."/>
            <person name="Tang S."/>
            <person name="Taylor M.S."/>
            <person name="Tegner J."/>
            <person name="Teichmann S.A."/>
            <person name="Ueda H.R."/>
            <person name="van Nimwegen E."/>
            <person name="Verardo R."/>
            <person name="Wei C.L."/>
            <person name="Yagi K."/>
            <person name="Yamanishi H."/>
            <person name="Zabarovsky E."/>
            <person name="Zhu S."/>
            <person name="Zimmer A."/>
            <person name="Hide W."/>
            <person name="Bult C."/>
            <person name="Grimmond S.M."/>
            <person name="Teasdale R.D."/>
            <person name="Liu E.T."/>
            <person name="Brusic V."/>
            <person name="Quackenbush J."/>
            <person name="Wahlestedt C."/>
            <person name="Mattick J.S."/>
            <person name="Hume D.A."/>
            <person name="Kai C."/>
            <person name="Sasaki D."/>
            <person name="Tomaru Y."/>
            <person name="Fukuda S."/>
            <person name="Kanamori-Katayama M."/>
            <person name="Suzuki M."/>
            <person name="Aoki J."/>
            <person name="Arakawa T."/>
            <person name="Iida J."/>
            <person name="Imamura K."/>
            <person name="Itoh M."/>
            <person name="Kato T."/>
            <person name="Kawaji H."/>
            <person name="Kawagashira N."/>
            <person name="Kawashima T."/>
            <person name="Kojima M."/>
            <person name="Kondo S."/>
            <person name="Konno H."/>
            <person name="Nakano K."/>
            <person name="Ninomiya N."/>
            <person name="Nishio T."/>
            <person name="Okada M."/>
            <person name="Plessy C."/>
            <person name="Shibata K."/>
            <person name="Shiraki T."/>
            <person name="Suzuki S."/>
            <person name="Tagami M."/>
            <person name="Waki K."/>
            <person name="Watahiki A."/>
            <person name="Okamura-Oho Y."/>
            <person name="Suzuki H."/>
            <person name="Kawai J."/>
            <person name="Hayashizaki Y."/>
        </authorList>
    </citation>
    <scope>NUCLEOTIDE SEQUENCE [LARGE SCALE MRNA]</scope>
    <source>
        <strain>C57BL/6J</strain>
        <strain>NOD</strain>
        <tissue>Testis</tissue>
    </source>
</reference>
<reference key="2">
    <citation type="journal article" date="2004" name="Genome Res.">
        <title>The status, quality, and expansion of the NIH full-length cDNA project: the Mammalian Gene Collection (MGC).</title>
        <authorList>
            <consortium name="The MGC Project Team"/>
        </authorList>
    </citation>
    <scope>NUCLEOTIDE SEQUENCE [LARGE SCALE MRNA]</scope>
    <source>
        <strain>FVB/N</strain>
        <tissue>Kidney</tissue>
        <tissue>Mammary tumor</tissue>
    </source>
</reference>
<reference key="3">
    <citation type="journal article" date="2010" name="Cell">
        <title>A tissue-specific atlas of mouse protein phosphorylation and expression.</title>
        <authorList>
            <person name="Huttlin E.L."/>
            <person name="Jedrychowski M.P."/>
            <person name="Elias J.E."/>
            <person name="Goswami T."/>
            <person name="Rad R."/>
            <person name="Beausoleil S.A."/>
            <person name="Villen J."/>
            <person name="Haas W."/>
            <person name="Sowa M.E."/>
            <person name="Gygi S.P."/>
        </authorList>
    </citation>
    <scope>PHOSPHORYLATION [LARGE SCALE ANALYSIS] AT SER-301</scope>
    <scope>IDENTIFICATION BY MASS SPECTROMETRY [LARGE SCALE ANALYSIS]</scope>
    <source>
        <tissue>Brain</tissue>
        <tissue>Brown adipose tissue</tissue>
        <tissue>Heart</tissue>
        <tissue>Kidney</tissue>
        <tissue>Liver</tissue>
        <tissue>Lung</tissue>
        <tissue>Pancreas</tissue>
        <tissue>Spleen</tissue>
        <tissue>Testis</tissue>
    </source>
</reference>
<feature type="initiator methionine" description="Removed" evidence="3">
    <location>
        <position position="1"/>
    </location>
</feature>
<feature type="chain" id="PRO_0000280447" description="Phenylalanine--tRNA ligase alpha subunit">
    <location>
        <begin position="2"/>
        <end position="508"/>
    </location>
</feature>
<feature type="binding site" evidence="3">
    <location>
        <position position="329"/>
    </location>
    <ligand>
        <name>L-phenylalanine</name>
        <dbReference type="ChEBI" id="CHEBI:58095"/>
    </ligand>
</feature>
<feature type="binding site" evidence="3">
    <location>
        <begin position="372"/>
        <end position="374"/>
    </location>
    <ligand>
        <name>L-phenylalanine</name>
        <dbReference type="ChEBI" id="CHEBI:58095"/>
    </ligand>
</feature>
<feature type="binding site" evidence="3">
    <location>
        <position position="412"/>
    </location>
    <ligand>
        <name>L-phenylalanine</name>
        <dbReference type="ChEBI" id="CHEBI:58095"/>
    </ligand>
</feature>
<feature type="binding site" evidence="1">
    <location>
        <position position="414"/>
    </location>
    <ligand>
        <name>Mg(2+)</name>
        <dbReference type="ChEBI" id="CHEBI:18420"/>
        <note>shared with beta subunit</note>
    </ligand>
</feature>
<feature type="binding site" evidence="3">
    <location>
        <position position="438"/>
    </location>
    <ligand>
        <name>L-phenylalanine</name>
        <dbReference type="ChEBI" id="CHEBI:58095"/>
    </ligand>
</feature>
<feature type="modified residue" description="N-acetylalanine" evidence="3">
    <location>
        <position position="2"/>
    </location>
</feature>
<feature type="modified residue" description="Phosphoserine" evidence="3">
    <location>
        <position position="193"/>
    </location>
</feature>
<feature type="modified residue" description="Phosphoserine" evidence="5">
    <location>
        <position position="301"/>
    </location>
</feature>
<feature type="modified residue" description="N6-acetyllysine" evidence="3">
    <location>
        <position position="311"/>
    </location>
</feature>
<feature type="sequence conflict" description="In Ref. 2; AAH06862/AAH13533." evidence="4" ref="2">
    <original>G</original>
    <variation>D</variation>
    <location>
        <position position="291"/>
    </location>
</feature>
<feature type="sequence conflict" description="In Ref. 2; AAH13533." evidence="4" ref="2">
    <location>
        <position position="343"/>
    </location>
</feature>
<feature type="sequence conflict" description="In Ref. 2; AAH06862." evidence="4" ref="2">
    <original>I</original>
    <variation>T</variation>
    <location>
        <position position="455"/>
    </location>
</feature>
<feature type="sequence conflict" description="In Ref. 1; BAE32726." evidence="4" ref="1">
    <original>I</original>
    <variation>V</variation>
    <location>
        <position position="455"/>
    </location>
</feature>
<dbReference type="EC" id="6.1.1.20" evidence="3"/>
<dbReference type="EMBL" id="AK031697">
    <property type="protein sequence ID" value="BAC27519.1"/>
    <property type="molecule type" value="mRNA"/>
</dbReference>
<dbReference type="EMBL" id="AK154629">
    <property type="protein sequence ID" value="BAE32726.1"/>
    <property type="molecule type" value="mRNA"/>
</dbReference>
<dbReference type="EMBL" id="BC006862">
    <property type="protein sequence ID" value="AAH06862.1"/>
    <property type="molecule type" value="mRNA"/>
</dbReference>
<dbReference type="EMBL" id="BC013533">
    <property type="protein sequence ID" value="AAH13533.1"/>
    <property type="molecule type" value="mRNA"/>
</dbReference>
<dbReference type="CCDS" id="CCDS22480.2"/>
<dbReference type="RefSeq" id="NP_079924.2">
    <property type="nucleotide sequence ID" value="NM_025648.3"/>
</dbReference>
<dbReference type="SMR" id="Q8C0C7"/>
<dbReference type="BioGRID" id="211576">
    <property type="interactions" value="12"/>
</dbReference>
<dbReference type="FunCoup" id="Q8C0C7">
    <property type="interactions" value="2896"/>
</dbReference>
<dbReference type="IntAct" id="Q8C0C7">
    <property type="interactions" value="4"/>
</dbReference>
<dbReference type="STRING" id="10090.ENSMUSP00000003906"/>
<dbReference type="GlyGen" id="Q8C0C7">
    <property type="glycosylation" value="1 site, 1 O-linked glycan (1 site)"/>
</dbReference>
<dbReference type="iPTMnet" id="Q8C0C7"/>
<dbReference type="PhosphoSitePlus" id="Q8C0C7"/>
<dbReference type="SwissPalm" id="Q8C0C7"/>
<dbReference type="jPOST" id="Q8C0C7"/>
<dbReference type="PaxDb" id="10090-ENSMUSP00000003906"/>
<dbReference type="PeptideAtlas" id="Q8C0C7"/>
<dbReference type="ProteomicsDB" id="258789"/>
<dbReference type="Pumba" id="Q8C0C7"/>
<dbReference type="Antibodypedia" id="1072">
    <property type="antibodies" value="139 antibodies from 25 providers"/>
</dbReference>
<dbReference type="DNASU" id="66590"/>
<dbReference type="Ensembl" id="ENSMUST00000003906.13">
    <property type="protein sequence ID" value="ENSMUSP00000003906.7"/>
    <property type="gene ID" value="ENSMUSG00000003808.19"/>
</dbReference>
<dbReference type="GeneID" id="66590"/>
<dbReference type="KEGG" id="mmu:66590"/>
<dbReference type="UCSC" id="uc009mnt.2">
    <property type="organism name" value="mouse"/>
</dbReference>
<dbReference type="AGR" id="MGI:1913840"/>
<dbReference type="CTD" id="2193"/>
<dbReference type="MGI" id="MGI:1913840">
    <property type="gene designation" value="Farsa"/>
</dbReference>
<dbReference type="VEuPathDB" id="HostDB:ENSMUSG00000003808"/>
<dbReference type="eggNOG" id="KOG2784">
    <property type="taxonomic scope" value="Eukaryota"/>
</dbReference>
<dbReference type="GeneTree" id="ENSGT00390000006387"/>
<dbReference type="InParanoid" id="Q8C0C7"/>
<dbReference type="OMA" id="QIEGWVM"/>
<dbReference type="OrthoDB" id="238316at2759"/>
<dbReference type="PhylomeDB" id="Q8C0C7"/>
<dbReference type="TreeFam" id="TF300647"/>
<dbReference type="BioGRID-ORCS" id="66590">
    <property type="hits" value="23 hits in 79 CRISPR screens"/>
</dbReference>
<dbReference type="CD-CODE" id="CE726F99">
    <property type="entry name" value="Postsynaptic density"/>
</dbReference>
<dbReference type="ChiTaRS" id="Farsa">
    <property type="organism name" value="mouse"/>
</dbReference>
<dbReference type="PRO" id="PR:Q8C0C7"/>
<dbReference type="Proteomes" id="UP000000589">
    <property type="component" value="Chromosome 8"/>
</dbReference>
<dbReference type="RNAct" id="Q8C0C7">
    <property type="molecule type" value="protein"/>
</dbReference>
<dbReference type="Bgee" id="ENSMUSG00000003808">
    <property type="expression patterns" value="Expressed in spermatocyte and 218 other cell types or tissues"/>
</dbReference>
<dbReference type="ExpressionAtlas" id="Q8C0C7">
    <property type="expression patterns" value="baseline and differential"/>
</dbReference>
<dbReference type="GO" id="GO:0005737">
    <property type="term" value="C:cytoplasm"/>
    <property type="evidence" value="ECO:0000250"/>
    <property type="project" value="UniProtKB"/>
</dbReference>
<dbReference type="GO" id="GO:0009328">
    <property type="term" value="C:phenylalanine-tRNA ligase complex"/>
    <property type="evidence" value="ECO:0000250"/>
    <property type="project" value="UniProtKB"/>
</dbReference>
<dbReference type="GO" id="GO:0005524">
    <property type="term" value="F:ATP binding"/>
    <property type="evidence" value="ECO:0007669"/>
    <property type="project" value="UniProtKB-KW"/>
</dbReference>
<dbReference type="GO" id="GO:0000287">
    <property type="term" value="F:magnesium ion binding"/>
    <property type="evidence" value="ECO:0000250"/>
    <property type="project" value="UniProtKB"/>
</dbReference>
<dbReference type="GO" id="GO:0004826">
    <property type="term" value="F:phenylalanine-tRNA ligase activity"/>
    <property type="evidence" value="ECO:0000250"/>
    <property type="project" value="UniProtKB"/>
</dbReference>
<dbReference type="GO" id="GO:0000049">
    <property type="term" value="F:tRNA binding"/>
    <property type="evidence" value="ECO:0007669"/>
    <property type="project" value="InterPro"/>
</dbReference>
<dbReference type="GO" id="GO:0006432">
    <property type="term" value="P:phenylalanyl-tRNA aminoacylation"/>
    <property type="evidence" value="ECO:0000250"/>
    <property type="project" value="UniProtKB"/>
</dbReference>
<dbReference type="GO" id="GO:0051290">
    <property type="term" value="P:protein heterotetramerization"/>
    <property type="evidence" value="ECO:0000250"/>
    <property type="project" value="UniProtKB"/>
</dbReference>
<dbReference type="CDD" id="cd00496">
    <property type="entry name" value="PheRS_alpha_core"/>
    <property type="match status" value="1"/>
</dbReference>
<dbReference type="FunFam" id="1.10.10.2320:FF:000001">
    <property type="entry name" value="phenylalanine--tRNA ligase alpha subunit"/>
    <property type="match status" value="1"/>
</dbReference>
<dbReference type="FunFam" id="1.10.10.2330:FF:000001">
    <property type="entry name" value="phenylalanine--tRNA ligase alpha subunit"/>
    <property type="match status" value="1"/>
</dbReference>
<dbReference type="FunFam" id="3.30.1370.240:FF:000002">
    <property type="entry name" value="phenylalanine--tRNA ligase alpha subunit"/>
    <property type="match status" value="1"/>
</dbReference>
<dbReference type="FunFam" id="3.30.930.10:FF:000036">
    <property type="entry name" value="phenylalanine--tRNA ligase alpha subunit"/>
    <property type="match status" value="1"/>
</dbReference>
<dbReference type="Gene3D" id="1.10.10.2320">
    <property type="match status" value="1"/>
</dbReference>
<dbReference type="Gene3D" id="1.10.10.2330">
    <property type="match status" value="1"/>
</dbReference>
<dbReference type="Gene3D" id="3.30.1370.240">
    <property type="match status" value="1"/>
</dbReference>
<dbReference type="Gene3D" id="3.30.930.10">
    <property type="entry name" value="Bira Bifunctional Protein, Domain 2"/>
    <property type="match status" value="1"/>
</dbReference>
<dbReference type="InterPro" id="IPR006195">
    <property type="entry name" value="aa-tRNA-synth_II"/>
</dbReference>
<dbReference type="InterPro" id="IPR045864">
    <property type="entry name" value="aa-tRNA-synth_II/BPL/LPL"/>
</dbReference>
<dbReference type="InterPro" id="IPR004529">
    <property type="entry name" value="Phe-tRNA-synth_IIc_asu"/>
</dbReference>
<dbReference type="InterPro" id="IPR002319">
    <property type="entry name" value="Phenylalanyl-tRNA_Synthase"/>
</dbReference>
<dbReference type="InterPro" id="IPR040724">
    <property type="entry name" value="PheRS_DBD1"/>
</dbReference>
<dbReference type="InterPro" id="IPR040586">
    <property type="entry name" value="PheRS_DBD2"/>
</dbReference>
<dbReference type="InterPro" id="IPR040725">
    <property type="entry name" value="PheRS_DBD3"/>
</dbReference>
<dbReference type="InterPro" id="IPR036390">
    <property type="entry name" value="WH_DNA-bd_sf"/>
</dbReference>
<dbReference type="NCBIfam" id="TIGR00468">
    <property type="entry name" value="pheS"/>
    <property type="match status" value="1"/>
</dbReference>
<dbReference type="NCBIfam" id="NF003210">
    <property type="entry name" value="PRK04172.1"/>
    <property type="match status" value="1"/>
</dbReference>
<dbReference type="PANTHER" id="PTHR11538:SF40">
    <property type="entry name" value="PHENYLALANINE--TRNA LIGASE ALPHA SUBUNIT"/>
    <property type="match status" value="1"/>
</dbReference>
<dbReference type="PANTHER" id="PTHR11538">
    <property type="entry name" value="PHENYLALANYL-TRNA SYNTHETASE"/>
    <property type="match status" value="1"/>
</dbReference>
<dbReference type="Pfam" id="PF18552">
    <property type="entry name" value="PheRS_DBD1"/>
    <property type="match status" value="1"/>
</dbReference>
<dbReference type="Pfam" id="PF18554">
    <property type="entry name" value="PheRS_DBD2"/>
    <property type="match status" value="1"/>
</dbReference>
<dbReference type="Pfam" id="PF18553">
    <property type="entry name" value="PheRS_DBD3"/>
    <property type="match status" value="1"/>
</dbReference>
<dbReference type="Pfam" id="PF01409">
    <property type="entry name" value="tRNA-synt_2d"/>
    <property type="match status" value="1"/>
</dbReference>
<dbReference type="SUPFAM" id="SSF55681">
    <property type="entry name" value="Class II aaRS and biotin synthetases"/>
    <property type="match status" value="1"/>
</dbReference>
<dbReference type="SUPFAM" id="SSF46785">
    <property type="entry name" value="Winged helix' DNA-binding domain"/>
    <property type="match status" value="1"/>
</dbReference>
<dbReference type="PROSITE" id="PS50862">
    <property type="entry name" value="AA_TRNA_LIGASE_II"/>
    <property type="match status" value="1"/>
</dbReference>
<comment type="catalytic activity">
    <reaction evidence="3">
        <text>tRNA(Phe) + L-phenylalanine + ATP = L-phenylalanyl-tRNA(Phe) + AMP + diphosphate + H(+)</text>
        <dbReference type="Rhea" id="RHEA:19413"/>
        <dbReference type="Rhea" id="RHEA-COMP:9668"/>
        <dbReference type="Rhea" id="RHEA-COMP:9699"/>
        <dbReference type="ChEBI" id="CHEBI:15378"/>
        <dbReference type="ChEBI" id="CHEBI:30616"/>
        <dbReference type="ChEBI" id="CHEBI:33019"/>
        <dbReference type="ChEBI" id="CHEBI:58095"/>
        <dbReference type="ChEBI" id="CHEBI:78442"/>
        <dbReference type="ChEBI" id="CHEBI:78531"/>
        <dbReference type="ChEBI" id="CHEBI:456215"/>
        <dbReference type="EC" id="6.1.1.20"/>
    </reaction>
</comment>
<comment type="cofactor">
    <cofactor evidence="1">
        <name>Mg(2+)</name>
        <dbReference type="ChEBI" id="CHEBI:18420"/>
    </cofactor>
</comment>
<comment type="subunit">
    <text evidence="3">Heterotetramer; dimer of two heterodimers formed by FARSA and FARSB.</text>
</comment>
<comment type="subcellular location">
    <subcellularLocation>
        <location evidence="2">Cytoplasm</location>
    </subcellularLocation>
</comment>
<comment type="similarity">
    <text evidence="4">Belongs to the class-II aminoacyl-tRNA synthetase family. Phe-tRNA synthetase alpha subunit type 2 subfamily.</text>
</comment>